<evidence type="ECO:0000255" key="1">
    <source>
        <dbReference type="HAMAP-Rule" id="MF_01216"/>
    </source>
</evidence>
<organism>
    <name type="scientific">Bradyrhizobium sp. (strain BTAi1 / ATCC BAA-1182)</name>
    <dbReference type="NCBI Taxonomy" id="288000"/>
    <lineage>
        <taxon>Bacteria</taxon>
        <taxon>Pseudomonadati</taxon>
        <taxon>Pseudomonadota</taxon>
        <taxon>Alphaproteobacteria</taxon>
        <taxon>Hyphomicrobiales</taxon>
        <taxon>Nitrobacteraceae</taxon>
        <taxon>Bradyrhizobium</taxon>
    </lineage>
</organism>
<protein>
    <recommendedName>
        <fullName evidence="1">FMN-dependent NADH:quinone oxidoreductase</fullName>
        <ecNumber evidence="1">1.6.5.-</ecNumber>
    </recommendedName>
    <alternativeName>
        <fullName evidence="1">Azo-dye reductase</fullName>
    </alternativeName>
    <alternativeName>
        <fullName evidence="1">FMN-dependent NADH-azo compound oxidoreductase</fullName>
    </alternativeName>
    <alternativeName>
        <fullName evidence="1">FMN-dependent NADH-azoreductase</fullName>
        <ecNumber evidence="1">1.7.1.17</ecNumber>
    </alternativeName>
</protein>
<reference key="1">
    <citation type="journal article" date="2007" name="Science">
        <title>Legumes symbioses: absence of nod genes in photosynthetic bradyrhizobia.</title>
        <authorList>
            <person name="Giraud E."/>
            <person name="Moulin L."/>
            <person name="Vallenet D."/>
            <person name="Barbe V."/>
            <person name="Cytryn E."/>
            <person name="Avarre J.-C."/>
            <person name="Jaubert M."/>
            <person name="Simon D."/>
            <person name="Cartieaux F."/>
            <person name="Prin Y."/>
            <person name="Bena G."/>
            <person name="Hannibal L."/>
            <person name="Fardoux J."/>
            <person name="Kojadinovic M."/>
            <person name="Vuillet L."/>
            <person name="Lajus A."/>
            <person name="Cruveiller S."/>
            <person name="Rouy Z."/>
            <person name="Mangenot S."/>
            <person name="Segurens B."/>
            <person name="Dossat C."/>
            <person name="Franck W.L."/>
            <person name="Chang W.-S."/>
            <person name="Saunders E."/>
            <person name="Bruce D."/>
            <person name="Richardson P."/>
            <person name="Normand P."/>
            <person name="Dreyfus B."/>
            <person name="Pignol D."/>
            <person name="Stacey G."/>
            <person name="Emerich D."/>
            <person name="Vermeglio A."/>
            <person name="Medigue C."/>
            <person name="Sadowsky M."/>
        </authorList>
    </citation>
    <scope>NUCLEOTIDE SEQUENCE [LARGE SCALE GENOMIC DNA]</scope>
    <source>
        <strain>BTAi1 / ATCC BAA-1182</strain>
    </source>
</reference>
<name>AZOR_BRASB</name>
<comment type="function">
    <text evidence="1">Quinone reductase that provides resistance to thiol-specific stress caused by electrophilic quinones.</text>
</comment>
<comment type="function">
    <text evidence="1">Also exhibits azoreductase activity. Catalyzes the reductive cleavage of the azo bond in aromatic azo compounds to the corresponding amines.</text>
</comment>
<comment type="catalytic activity">
    <reaction evidence="1">
        <text>2 a quinone + NADH + H(+) = 2 a 1,4-benzosemiquinone + NAD(+)</text>
        <dbReference type="Rhea" id="RHEA:65952"/>
        <dbReference type="ChEBI" id="CHEBI:15378"/>
        <dbReference type="ChEBI" id="CHEBI:57540"/>
        <dbReference type="ChEBI" id="CHEBI:57945"/>
        <dbReference type="ChEBI" id="CHEBI:132124"/>
        <dbReference type="ChEBI" id="CHEBI:134225"/>
    </reaction>
</comment>
<comment type="catalytic activity">
    <reaction evidence="1">
        <text>N,N-dimethyl-1,4-phenylenediamine + anthranilate + 2 NAD(+) = 2-(4-dimethylaminophenyl)diazenylbenzoate + 2 NADH + 2 H(+)</text>
        <dbReference type="Rhea" id="RHEA:55872"/>
        <dbReference type="ChEBI" id="CHEBI:15378"/>
        <dbReference type="ChEBI" id="CHEBI:15783"/>
        <dbReference type="ChEBI" id="CHEBI:16567"/>
        <dbReference type="ChEBI" id="CHEBI:57540"/>
        <dbReference type="ChEBI" id="CHEBI:57945"/>
        <dbReference type="ChEBI" id="CHEBI:71579"/>
        <dbReference type="EC" id="1.7.1.17"/>
    </reaction>
</comment>
<comment type="cofactor">
    <cofactor evidence="1">
        <name>FMN</name>
        <dbReference type="ChEBI" id="CHEBI:58210"/>
    </cofactor>
    <text evidence="1">Binds 1 FMN per subunit.</text>
</comment>
<comment type="subunit">
    <text evidence="1">Homodimer.</text>
</comment>
<comment type="similarity">
    <text evidence="1">Belongs to the azoreductase type 1 family.</text>
</comment>
<accession>A5EF62</accession>
<dbReference type="EC" id="1.6.5.-" evidence="1"/>
<dbReference type="EC" id="1.7.1.17" evidence="1"/>
<dbReference type="EMBL" id="CP000494">
    <property type="protein sequence ID" value="ABQ34806.1"/>
    <property type="molecule type" value="Genomic_DNA"/>
</dbReference>
<dbReference type="RefSeq" id="WP_012042829.1">
    <property type="nucleotide sequence ID" value="NC_009485.1"/>
</dbReference>
<dbReference type="SMR" id="A5EF62"/>
<dbReference type="STRING" id="288000.BBta_2663"/>
<dbReference type="KEGG" id="bbt:BBta_2663"/>
<dbReference type="eggNOG" id="COG1182">
    <property type="taxonomic scope" value="Bacteria"/>
</dbReference>
<dbReference type="HOGENOM" id="CLU_088964_0_0_5"/>
<dbReference type="OrthoDB" id="9787136at2"/>
<dbReference type="Proteomes" id="UP000000246">
    <property type="component" value="Chromosome"/>
</dbReference>
<dbReference type="GO" id="GO:0009055">
    <property type="term" value="F:electron transfer activity"/>
    <property type="evidence" value="ECO:0007669"/>
    <property type="project" value="UniProtKB-UniRule"/>
</dbReference>
<dbReference type="GO" id="GO:0010181">
    <property type="term" value="F:FMN binding"/>
    <property type="evidence" value="ECO:0007669"/>
    <property type="project" value="UniProtKB-UniRule"/>
</dbReference>
<dbReference type="GO" id="GO:0016652">
    <property type="term" value="F:oxidoreductase activity, acting on NAD(P)H as acceptor"/>
    <property type="evidence" value="ECO:0007669"/>
    <property type="project" value="UniProtKB-UniRule"/>
</dbReference>
<dbReference type="GO" id="GO:0016655">
    <property type="term" value="F:oxidoreductase activity, acting on NAD(P)H, quinone or similar compound as acceptor"/>
    <property type="evidence" value="ECO:0007669"/>
    <property type="project" value="InterPro"/>
</dbReference>
<dbReference type="Gene3D" id="3.40.50.360">
    <property type="match status" value="1"/>
</dbReference>
<dbReference type="HAMAP" id="MF_01216">
    <property type="entry name" value="Azoreductase_type1"/>
    <property type="match status" value="1"/>
</dbReference>
<dbReference type="InterPro" id="IPR003680">
    <property type="entry name" value="Flavodoxin_fold"/>
</dbReference>
<dbReference type="InterPro" id="IPR029039">
    <property type="entry name" value="Flavoprotein-like_sf"/>
</dbReference>
<dbReference type="InterPro" id="IPR050104">
    <property type="entry name" value="FMN-dep_NADH:Q_OxRdtase_AzoR1"/>
</dbReference>
<dbReference type="InterPro" id="IPR023048">
    <property type="entry name" value="NADH:quinone_OxRdtase_FMN_depd"/>
</dbReference>
<dbReference type="PANTHER" id="PTHR43741">
    <property type="entry name" value="FMN-DEPENDENT NADH-AZOREDUCTASE 1"/>
    <property type="match status" value="1"/>
</dbReference>
<dbReference type="PANTHER" id="PTHR43741:SF4">
    <property type="entry name" value="FMN-DEPENDENT NADH:QUINONE OXIDOREDUCTASE"/>
    <property type="match status" value="1"/>
</dbReference>
<dbReference type="Pfam" id="PF02525">
    <property type="entry name" value="Flavodoxin_2"/>
    <property type="match status" value="1"/>
</dbReference>
<dbReference type="SUPFAM" id="SSF52218">
    <property type="entry name" value="Flavoproteins"/>
    <property type="match status" value="1"/>
</dbReference>
<keyword id="KW-0285">Flavoprotein</keyword>
<keyword id="KW-0288">FMN</keyword>
<keyword id="KW-0520">NAD</keyword>
<keyword id="KW-0560">Oxidoreductase</keyword>
<keyword id="KW-1185">Reference proteome</keyword>
<feature type="chain" id="PRO_1000066496" description="FMN-dependent NADH:quinone oxidoreductase">
    <location>
        <begin position="1"/>
        <end position="201"/>
    </location>
</feature>
<feature type="binding site" evidence="1">
    <location>
        <position position="9"/>
    </location>
    <ligand>
        <name>FMN</name>
        <dbReference type="ChEBI" id="CHEBI:58210"/>
    </ligand>
</feature>
<feature type="binding site" evidence="1">
    <location>
        <begin position="93"/>
        <end position="96"/>
    </location>
    <ligand>
        <name>FMN</name>
        <dbReference type="ChEBI" id="CHEBI:58210"/>
    </ligand>
</feature>
<gene>
    <name evidence="1" type="primary">azoR</name>
    <name type="ordered locus">BBta_2663</name>
</gene>
<sequence length="201" mass="20780">MKLLHIDSSIAGVGSVTRELSAEIVALLKGADKSWNVIYRDLVAEPLSHLTGGYLAALQGAPADQAVQADVGAGLAVMEDFLAADVIVIGAPMYNFGVPSQLKAWIDRLAVPGKTFSYGEHGPVGLCKGKKVIVASARGGIFSAGSPLAALDHQENYLLSFFGFLGIAEISFVRAEGVALGPVVRAKAIAAAKEHAAKLAA</sequence>
<proteinExistence type="inferred from homology"/>